<protein>
    <recommendedName>
        <fullName>Flagellin A</fullName>
    </recommendedName>
</protein>
<keyword id="KW-0975">Bacterial flagellum</keyword>
<keyword id="KW-0677">Repeat</keyword>
<keyword id="KW-0964">Secreted</keyword>
<accession>Q46113</accession>
<accession>Q01673</accession>
<gene>
    <name type="primary">flaA</name>
    <name type="synonym">fla1</name>
</gene>
<evidence type="ECO:0000250" key="1"/>
<evidence type="ECO:0000305" key="2"/>
<proteinExistence type="inferred from homology"/>
<reference key="1">
    <citation type="journal article" date="1992" name="Curr. Microbiol.">
        <title>Cloning and sequence analysis of the flagellin gene of Campylobacter jejuni TGH9011.</title>
        <authorList>
            <person name="Khawaja R."/>
            <person name="Neote K."/>
            <person name="Bingham H.L."/>
            <person name="Penner J.L."/>
            <person name="Chan V.L."/>
        </authorList>
    </citation>
    <scope>NUCLEOTIDE SEQUENCE [GENOMIC DNA]</scope>
    <source>
        <strain>ATCC 43431 / TGH 9011 / Serotype LIO36</strain>
    </source>
</reference>
<reference key="2">
    <citation type="submission" date="1994-02" db="EMBL/GenBank/DDBJ databases">
        <title>Organization and sequence of the flagellin genes of Campylobacter jejuni TGH9011(ATCC43431).</title>
        <authorList>
            <person name="Chan V.L."/>
            <person name="Bingham H.L."/>
        </authorList>
    </citation>
    <scope>NUCLEOTIDE SEQUENCE [GENOMIC DNA]</scope>
    <source>
        <strain>ATCC 43431 / TGH 9011 / Serotype O:3</strain>
    </source>
</reference>
<sequence length="575" mass="59614">MGFRINTNVAALNAKANADLNSKSLDASLSRLSSGLRINSAADDASGMAIKDSLRSQANTLGQAISNGNDALGILQTADKAMDEQLKILDTIKTKATQAAQDGQSLKTRTMLQADINRLMEELDNIANTTSFNGKQLLSGNFINQEFQIGASSNQTVKASIGATQSSKIGLTRFETGSRISVGGEVQFTLKNYNGIDDFKFQKVVISTSVGTGLGALADEINKNADKTGVRATFTVETRGMGAVRAGATSDDFAINGVKIGKVDYKDGDANGALVSAINSVKDTTGVEASIDENGKLLLTSREGRGIKIEGNIGRGAFINPNMLENYGRLSLVKNDGKDILISGTNLSAIGFGTGNMISQASVSLRESKGQIDANVADAMGFNSANKGNILGGYSSVSAYMSSTGSGFSSGSGFSVGSGKNYSTGFANTIAISAASQLSAVYNVSAGSGFSSGSNLSQFATMKTSAGNTLGVKDETAGVTTLKGAMAVMDIAETAITNLDQIRADIGSVQNQVTSTINNITVTQVNVKAAESQIRDVDFAAESANYSKANILAQSGSYAMAQANSVQQNVLRLLQ</sequence>
<feature type="initiator methionine" description="Removed" evidence="1">
    <location>
        <position position="1"/>
    </location>
</feature>
<feature type="chain" id="PRO_0000182595" description="Flagellin A">
    <location>
        <begin position="2"/>
        <end position="575"/>
    </location>
</feature>
<feature type="repeat" description="1">
    <location>
        <begin position="405"/>
        <end position="409"/>
    </location>
</feature>
<feature type="repeat" description="2">
    <location>
        <begin position="411"/>
        <end position="415"/>
    </location>
</feature>
<feature type="repeat" description="3">
    <location>
        <begin position="447"/>
        <end position="450"/>
    </location>
</feature>
<feature type="sequence conflict" description="In Ref. 1; AAA17046." evidence="2" ref="1">
    <original>VTS</original>
    <variation>LQV</variation>
    <location>
        <begin position="513"/>
        <end position="515"/>
    </location>
</feature>
<feature type="sequence conflict" description="In Ref. 1; AAA17046." evidence="2" ref="1">
    <original>Q</original>
    <variation>T</variation>
    <location>
        <position position="533"/>
    </location>
</feature>
<feature type="sequence conflict" description="In Ref. 1; AAA17046." evidence="2" ref="1">
    <original>Y</original>
    <variation>F</variation>
    <location>
        <position position="546"/>
    </location>
</feature>
<feature type="sequence conflict" description="In Ref. 1; AAA17046." evidence="2" ref="1">
    <original>A</original>
    <variation>Y</variation>
    <location>
        <position position="549"/>
    </location>
</feature>
<feature type="sequence conflict" description="In Ref. 1; AAA17046." evidence="2" ref="1">
    <original>A</original>
    <variation>S</variation>
    <location>
        <position position="561"/>
    </location>
</feature>
<feature type="sequence conflict" description="In Ref. 1; AAA17046." evidence="2" ref="1">
    <original>S</original>
    <variation>A</variation>
    <location>
        <position position="565"/>
    </location>
</feature>
<feature type="sequence conflict" description="In Ref. 1; AAA17046." evidence="2" ref="1">
    <original>R</original>
    <variation>K</variation>
    <location>
        <position position="572"/>
    </location>
</feature>
<organism>
    <name type="scientific">Campylobacter jejuni</name>
    <dbReference type="NCBI Taxonomy" id="197"/>
    <lineage>
        <taxon>Bacteria</taxon>
        <taxon>Pseudomonadati</taxon>
        <taxon>Campylobacterota</taxon>
        <taxon>Epsilonproteobacteria</taxon>
        <taxon>Campylobacterales</taxon>
        <taxon>Campylobacteraceae</taxon>
        <taxon>Campylobacter</taxon>
    </lineage>
</organism>
<name>FLA2_CAMJU</name>
<comment type="function">
    <text>Flagellin is the subunit protein which polymerizes to form the filaments of bacterial flagella.</text>
</comment>
<comment type="subunit">
    <text>Heteromer of flaA and flaB.</text>
</comment>
<comment type="subcellular location">
    <subcellularLocation>
        <location>Secreted</location>
    </subcellularLocation>
    <subcellularLocation>
        <location>Bacterial flagellum</location>
    </subcellularLocation>
</comment>
<comment type="similarity">
    <text evidence="2">Belongs to the bacterial flagellin family.</text>
</comment>
<dbReference type="EMBL" id="M74578">
    <property type="protein sequence ID" value="AAA17046.1"/>
    <property type="molecule type" value="Genomic_DNA"/>
</dbReference>
<dbReference type="EMBL" id="Z29327">
    <property type="protein sequence ID" value="CAA82523.1"/>
    <property type="molecule type" value="Genomic_DNA"/>
</dbReference>
<dbReference type="PIR" id="I40615">
    <property type="entry name" value="I40615"/>
</dbReference>
<dbReference type="PIR" id="S41310">
    <property type="entry name" value="S41310"/>
</dbReference>
<dbReference type="SMR" id="Q46113"/>
<dbReference type="GO" id="GO:0009288">
    <property type="term" value="C:bacterial-type flagellum"/>
    <property type="evidence" value="ECO:0007669"/>
    <property type="project" value="UniProtKB-SubCell"/>
</dbReference>
<dbReference type="GO" id="GO:0005576">
    <property type="term" value="C:extracellular region"/>
    <property type="evidence" value="ECO:0007669"/>
    <property type="project" value="UniProtKB-SubCell"/>
</dbReference>
<dbReference type="GO" id="GO:0005198">
    <property type="term" value="F:structural molecule activity"/>
    <property type="evidence" value="ECO:0007669"/>
    <property type="project" value="InterPro"/>
</dbReference>
<dbReference type="Gene3D" id="3.30.70.2120">
    <property type="match status" value="1"/>
</dbReference>
<dbReference type="Gene3D" id="1.20.1330.10">
    <property type="entry name" value="f41 fragment of flagellin, N-terminal domain"/>
    <property type="match status" value="1"/>
</dbReference>
<dbReference type="Gene3D" id="6.10.10.10">
    <property type="entry name" value="Flagellar export chaperone, C-terminal domain"/>
    <property type="match status" value="1"/>
</dbReference>
<dbReference type="InterPro" id="IPR001492">
    <property type="entry name" value="Flagellin"/>
</dbReference>
<dbReference type="InterPro" id="IPR046358">
    <property type="entry name" value="Flagellin_C"/>
</dbReference>
<dbReference type="InterPro" id="IPR042187">
    <property type="entry name" value="Flagellin_C_sub2"/>
</dbReference>
<dbReference type="InterPro" id="IPR010810">
    <property type="entry name" value="Flagellin_hook_IN_motif"/>
</dbReference>
<dbReference type="InterPro" id="IPR001029">
    <property type="entry name" value="Flagellin_N"/>
</dbReference>
<dbReference type="NCBIfam" id="NF006264">
    <property type="entry name" value="PRK08411.1"/>
    <property type="match status" value="1"/>
</dbReference>
<dbReference type="NCBIfam" id="NF010116">
    <property type="entry name" value="PRK13589.1"/>
    <property type="match status" value="1"/>
</dbReference>
<dbReference type="PANTHER" id="PTHR42792">
    <property type="entry name" value="FLAGELLIN"/>
    <property type="match status" value="1"/>
</dbReference>
<dbReference type="PANTHER" id="PTHR42792:SF2">
    <property type="entry name" value="FLAGELLIN"/>
    <property type="match status" value="1"/>
</dbReference>
<dbReference type="Pfam" id="PF00700">
    <property type="entry name" value="Flagellin_C"/>
    <property type="match status" value="1"/>
</dbReference>
<dbReference type="Pfam" id="PF07196">
    <property type="entry name" value="Flagellin_IN"/>
    <property type="match status" value="2"/>
</dbReference>
<dbReference type="Pfam" id="PF00669">
    <property type="entry name" value="Flagellin_N"/>
    <property type="match status" value="1"/>
</dbReference>
<dbReference type="PRINTS" id="PR00207">
    <property type="entry name" value="FLAGELLIN"/>
</dbReference>
<dbReference type="SUPFAM" id="SSF64518">
    <property type="entry name" value="Phase 1 flagellin"/>
    <property type="match status" value="1"/>
</dbReference>